<feature type="chain" id="PRO_1000090045" description="tRNA sulfurtransferase">
    <location>
        <begin position="1"/>
        <end position="482"/>
    </location>
</feature>
<feature type="domain" description="THUMP" evidence="1">
    <location>
        <begin position="61"/>
        <end position="165"/>
    </location>
</feature>
<feature type="domain" description="Rhodanese" evidence="1">
    <location>
        <begin position="404"/>
        <end position="482"/>
    </location>
</feature>
<feature type="active site" description="Cysteine persulfide intermediate" evidence="1">
    <location>
        <position position="456"/>
    </location>
</feature>
<feature type="binding site" evidence="1">
    <location>
        <begin position="183"/>
        <end position="184"/>
    </location>
    <ligand>
        <name>ATP</name>
        <dbReference type="ChEBI" id="CHEBI:30616"/>
    </ligand>
</feature>
<feature type="binding site" evidence="1">
    <location>
        <position position="265"/>
    </location>
    <ligand>
        <name>ATP</name>
        <dbReference type="ChEBI" id="CHEBI:30616"/>
    </ligand>
</feature>
<feature type="binding site" evidence="1">
    <location>
        <position position="287"/>
    </location>
    <ligand>
        <name>ATP</name>
        <dbReference type="ChEBI" id="CHEBI:30616"/>
    </ligand>
</feature>
<feature type="binding site" evidence="1">
    <location>
        <position position="296"/>
    </location>
    <ligand>
        <name>ATP</name>
        <dbReference type="ChEBI" id="CHEBI:30616"/>
    </ligand>
</feature>
<feature type="disulfide bond" description="Redox-active" evidence="1">
    <location>
        <begin position="344"/>
        <end position="456"/>
    </location>
</feature>
<keyword id="KW-0067">ATP-binding</keyword>
<keyword id="KW-0963">Cytoplasm</keyword>
<keyword id="KW-1015">Disulfide bond</keyword>
<keyword id="KW-0547">Nucleotide-binding</keyword>
<keyword id="KW-0676">Redox-active center</keyword>
<keyword id="KW-0694">RNA-binding</keyword>
<keyword id="KW-0784">Thiamine biosynthesis</keyword>
<keyword id="KW-0808">Transferase</keyword>
<keyword id="KW-0820">tRNA-binding</keyword>
<reference key="1">
    <citation type="submission" date="2008-08" db="EMBL/GenBank/DDBJ databases">
        <title>Complete sequence of Vibrio fischeri strain MJ11.</title>
        <authorList>
            <person name="Mandel M.J."/>
            <person name="Stabb E.V."/>
            <person name="Ruby E.G."/>
            <person name="Ferriera S."/>
            <person name="Johnson J."/>
            <person name="Kravitz S."/>
            <person name="Beeson K."/>
            <person name="Sutton G."/>
            <person name="Rogers Y.-H."/>
            <person name="Friedman R."/>
            <person name="Frazier M."/>
            <person name="Venter J.C."/>
        </authorList>
    </citation>
    <scope>NUCLEOTIDE SEQUENCE [LARGE SCALE GENOMIC DNA]</scope>
    <source>
        <strain>MJ11</strain>
    </source>
</reference>
<comment type="function">
    <text evidence="1">Catalyzes the ATP-dependent transfer of a sulfur to tRNA to produce 4-thiouridine in position 8 of tRNAs, which functions as a near-UV photosensor. Also catalyzes the transfer of sulfur to the sulfur carrier protein ThiS, forming ThiS-thiocarboxylate. This is a step in the synthesis of thiazole, in the thiamine biosynthesis pathway. The sulfur is donated as persulfide by IscS.</text>
</comment>
<comment type="catalytic activity">
    <reaction evidence="1">
        <text>[ThiI sulfur-carrier protein]-S-sulfanyl-L-cysteine + a uridine in tRNA + 2 reduced [2Fe-2S]-[ferredoxin] + ATP + H(+) = [ThiI sulfur-carrier protein]-L-cysteine + a 4-thiouridine in tRNA + 2 oxidized [2Fe-2S]-[ferredoxin] + AMP + diphosphate</text>
        <dbReference type="Rhea" id="RHEA:24176"/>
        <dbReference type="Rhea" id="RHEA-COMP:10000"/>
        <dbReference type="Rhea" id="RHEA-COMP:10001"/>
        <dbReference type="Rhea" id="RHEA-COMP:13337"/>
        <dbReference type="Rhea" id="RHEA-COMP:13338"/>
        <dbReference type="Rhea" id="RHEA-COMP:13339"/>
        <dbReference type="Rhea" id="RHEA-COMP:13340"/>
        <dbReference type="ChEBI" id="CHEBI:15378"/>
        <dbReference type="ChEBI" id="CHEBI:29950"/>
        <dbReference type="ChEBI" id="CHEBI:30616"/>
        <dbReference type="ChEBI" id="CHEBI:33019"/>
        <dbReference type="ChEBI" id="CHEBI:33737"/>
        <dbReference type="ChEBI" id="CHEBI:33738"/>
        <dbReference type="ChEBI" id="CHEBI:61963"/>
        <dbReference type="ChEBI" id="CHEBI:65315"/>
        <dbReference type="ChEBI" id="CHEBI:136798"/>
        <dbReference type="ChEBI" id="CHEBI:456215"/>
        <dbReference type="EC" id="2.8.1.4"/>
    </reaction>
</comment>
<comment type="catalytic activity">
    <reaction evidence="1">
        <text>[ThiS sulfur-carrier protein]-C-terminal Gly-Gly-AMP + S-sulfanyl-L-cysteinyl-[cysteine desulfurase] + AH2 = [ThiS sulfur-carrier protein]-C-terminal-Gly-aminoethanethioate + L-cysteinyl-[cysteine desulfurase] + A + AMP + 2 H(+)</text>
        <dbReference type="Rhea" id="RHEA:43340"/>
        <dbReference type="Rhea" id="RHEA-COMP:12157"/>
        <dbReference type="Rhea" id="RHEA-COMP:12158"/>
        <dbReference type="Rhea" id="RHEA-COMP:12910"/>
        <dbReference type="Rhea" id="RHEA-COMP:19908"/>
        <dbReference type="ChEBI" id="CHEBI:13193"/>
        <dbReference type="ChEBI" id="CHEBI:15378"/>
        <dbReference type="ChEBI" id="CHEBI:17499"/>
        <dbReference type="ChEBI" id="CHEBI:29950"/>
        <dbReference type="ChEBI" id="CHEBI:61963"/>
        <dbReference type="ChEBI" id="CHEBI:90618"/>
        <dbReference type="ChEBI" id="CHEBI:232372"/>
        <dbReference type="ChEBI" id="CHEBI:456215"/>
    </reaction>
</comment>
<comment type="pathway">
    <text evidence="1">Cofactor biosynthesis; thiamine diphosphate biosynthesis.</text>
</comment>
<comment type="subcellular location">
    <subcellularLocation>
        <location evidence="1">Cytoplasm</location>
    </subcellularLocation>
</comment>
<comment type="similarity">
    <text evidence="1">Belongs to the ThiI family.</text>
</comment>
<protein>
    <recommendedName>
        <fullName evidence="1">tRNA sulfurtransferase</fullName>
        <ecNumber evidence="1">2.8.1.4</ecNumber>
    </recommendedName>
    <alternativeName>
        <fullName evidence="1">Sulfur carrier protein ThiS sulfurtransferase</fullName>
    </alternativeName>
    <alternativeName>
        <fullName evidence="1">Thiamine biosynthesis protein ThiI</fullName>
    </alternativeName>
    <alternativeName>
        <fullName evidence="1">tRNA 4-thiouridine synthase</fullName>
    </alternativeName>
</protein>
<organism>
    <name type="scientific">Aliivibrio fischeri (strain MJ11)</name>
    <name type="common">Vibrio fischeri</name>
    <dbReference type="NCBI Taxonomy" id="388396"/>
    <lineage>
        <taxon>Bacteria</taxon>
        <taxon>Pseudomonadati</taxon>
        <taxon>Pseudomonadota</taxon>
        <taxon>Gammaproteobacteria</taxon>
        <taxon>Vibrionales</taxon>
        <taxon>Vibrionaceae</taxon>
        <taxon>Aliivibrio</taxon>
    </lineage>
</organism>
<dbReference type="EC" id="2.8.1.4" evidence="1"/>
<dbReference type="EMBL" id="CP001139">
    <property type="protein sequence ID" value="ACH66037.1"/>
    <property type="molecule type" value="Genomic_DNA"/>
</dbReference>
<dbReference type="RefSeq" id="WP_005418113.1">
    <property type="nucleotide sequence ID" value="NC_011184.1"/>
</dbReference>
<dbReference type="SMR" id="B5FBH1"/>
<dbReference type="KEGG" id="vfm:VFMJ11_0736"/>
<dbReference type="HOGENOM" id="CLU_037952_4_1_6"/>
<dbReference type="UniPathway" id="UPA00060"/>
<dbReference type="Proteomes" id="UP000001857">
    <property type="component" value="Chromosome I"/>
</dbReference>
<dbReference type="GO" id="GO:0005829">
    <property type="term" value="C:cytosol"/>
    <property type="evidence" value="ECO:0007669"/>
    <property type="project" value="TreeGrafter"/>
</dbReference>
<dbReference type="GO" id="GO:0005524">
    <property type="term" value="F:ATP binding"/>
    <property type="evidence" value="ECO:0007669"/>
    <property type="project" value="UniProtKB-UniRule"/>
</dbReference>
<dbReference type="GO" id="GO:0004810">
    <property type="term" value="F:CCA tRNA nucleotidyltransferase activity"/>
    <property type="evidence" value="ECO:0007669"/>
    <property type="project" value="InterPro"/>
</dbReference>
<dbReference type="GO" id="GO:0000049">
    <property type="term" value="F:tRNA binding"/>
    <property type="evidence" value="ECO:0007669"/>
    <property type="project" value="UniProtKB-UniRule"/>
</dbReference>
<dbReference type="GO" id="GO:0140741">
    <property type="term" value="F:tRNA-uracil-4 sulfurtransferase activity"/>
    <property type="evidence" value="ECO:0007669"/>
    <property type="project" value="UniProtKB-EC"/>
</dbReference>
<dbReference type="GO" id="GO:0009228">
    <property type="term" value="P:thiamine biosynthetic process"/>
    <property type="evidence" value="ECO:0007669"/>
    <property type="project" value="UniProtKB-KW"/>
</dbReference>
<dbReference type="GO" id="GO:0009229">
    <property type="term" value="P:thiamine diphosphate biosynthetic process"/>
    <property type="evidence" value="ECO:0007669"/>
    <property type="project" value="UniProtKB-UniRule"/>
</dbReference>
<dbReference type="GO" id="GO:0052837">
    <property type="term" value="P:thiazole biosynthetic process"/>
    <property type="evidence" value="ECO:0007669"/>
    <property type="project" value="InterPro"/>
</dbReference>
<dbReference type="GO" id="GO:0002937">
    <property type="term" value="P:tRNA 4-thiouridine biosynthesis"/>
    <property type="evidence" value="ECO:0007669"/>
    <property type="project" value="TreeGrafter"/>
</dbReference>
<dbReference type="CDD" id="cd01712">
    <property type="entry name" value="PPase_ThiI"/>
    <property type="match status" value="1"/>
</dbReference>
<dbReference type="CDD" id="cd00158">
    <property type="entry name" value="RHOD"/>
    <property type="match status" value="1"/>
</dbReference>
<dbReference type="CDD" id="cd11716">
    <property type="entry name" value="THUMP_ThiI"/>
    <property type="match status" value="1"/>
</dbReference>
<dbReference type="FunFam" id="3.40.50.620:FF:000029">
    <property type="entry name" value="tRNA sulfurtransferase"/>
    <property type="match status" value="1"/>
</dbReference>
<dbReference type="Gene3D" id="3.30.2130.30">
    <property type="match status" value="1"/>
</dbReference>
<dbReference type="Gene3D" id="3.40.50.620">
    <property type="entry name" value="HUPs"/>
    <property type="match status" value="1"/>
</dbReference>
<dbReference type="Gene3D" id="3.40.250.10">
    <property type="entry name" value="Rhodanese-like domain"/>
    <property type="match status" value="1"/>
</dbReference>
<dbReference type="HAMAP" id="MF_00021">
    <property type="entry name" value="ThiI"/>
    <property type="match status" value="1"/>
</dbReference>
<dbReference type="InterPro" id="IPR001763">
    <property type="entry name" value="Rhodanese-like_dom"/>
</dbReference>
<dbReference type="InterPro" id="IPR036873">
    <property type="entry name" value="Rhodanese-like_dom_sf"/>
</dbReference>
<dbReference type="InterPro" id="IPR014729">
    <property type="entry name" value="Rossmann-like_a/b/a_fold"/>
</dbReference>
<dbReference type="InterPro" id="IPR020536">
    <property type="entry name" value="ThiI_AANH"/>
</dbReference>
<dbReference type="InterPro" id="IPR054173">
    <property type="entry name" value="ThiI_fer"/>
</dbReference>
<dbReference type="InterPro" id="IPR049961">
    <property type="entry name" value="ThiI_N"/>
</dbReference>
<dbReference type="InterPro" id="IPR026340">
    <property type="entry name" value="THII_Thiazole_biosynth_dom"/>
</dbReference>
<dbReference type="InterPro" id="IPR004114">
    <property type="entry name" value="THUMP_dom"/>
</dbReference>
<dbReference type="InterPro" id="IPR049962">
    <property type="entry name" value="THUMP_ThiI"/>
</dbReference>
<dbReference type="InterPro" id="IPR003720">
    <property type="entry name" value="tRNA_STrfase"/>
</dbReference>
<dbReference type="InterPro" id="IPR050102">
    <property type="entry name" value="tRNA_sulfurtransferase_ThiI"/>
</dbReference>
<dbReference type="NCBIfam" id="TIGR04271">
    <property type="entry name" value="ThiI_C_thiazole"/>
    <property type="match status" value="1"/>
</dbReference>
<dbReference type="NCBIfam" id="TIGR00342">
    <property type="entry name" value="tRNA uracil 4-sulfurtransferase ThiI"/>
    <property type="match status" value="1"/>
</dbReference>
<dbReference type="PANTHER" id="PTHR43209">
    <property type="entry name" value="TRNA SULFURTRANSFERASE"/>
    <property type="match status" value="1"/>
</dbReference>
<dbReference type="PANTHER" id="PTHR43209:SF1">
    <property type="entry name" value="TRNA SULFURTRANSFERASE"/>
    <property type="match status" value="1"/>
</dbReference>
<dbReference type="Pfam" id="PF02568">
    <property type="entry name" value="ThiI"/>
    <property type="match status" value="1"/>
</dbReference>
<dbReference type="Pfam" id="PF22025">
    <property type="entry name" value="ThiI_fer"/>
    <property type="match status" value="1"/>
</dbReference>
<dbReference type="Pfam" id="PF02926">
    <property type="entry name" value="THUMP"/>
    <property type="match status" value="1"/>
</dbReference>
<dbReference type="SMART" id="SM00981">
    <property type="entry name" value="THUMP"/>
    <property type="match status" value="1"/>
</dbReference>
<dbReference type="SUPFAM" id="SSF52402">
    <property type="entry name" value="Adenine nucleotide alpha hydrolases-like"/>
    <property type="match status" value="1"/>
</dbReference>
<dbReference type="SUPFAM" id="SSF52821">
    <property type="entry name" value="Rhodanese/Cell cycle control phosphatase"/>
    <property type="match status" value="1"/>
</dbReference>
<dbReference type="SUPFAM" id="SSF143437">
    <property type="entry name" value="THUMP domain-like"/>
    <property type="match status" value="1"/>
</dbReference>
<dbReference type="PROSITE" id="PS50206">
    <property type="entry name" value="RHODANESE_3"/>
    <property type="match status" value="1"/>
</dbReference>
<dbReference type="PROSITE" id="PS51165">
    <property type="entry name" value="THUMP"/>
    <property type="match status" value="1"/>
</dbReference>
<evidence type="ECO:0000255" key="1">
    <source>
        <dbReference type="HAMAP-Rule" id="MF_00021"/>
    </source>
</evidence>
<sequence>MKFIVKPHPEVFVKSDSVRKRFIRILESNLRSIIQRETKGVEVINRRDHIEVTGLSDEYRDVTLSVLTQTPGIHHVLEVKQSGFKDMHDIFEQCLEMNREVIEGKTFCVRVKRRGNHDFTSIELERYVGGGLNQSVESASVRLKNPEVTVKFEVANDKLNLIIARHKGLGGFPLGTQEDVLSLISGGFDSGVSSYLHIKRGSKVHYLFFNLGGPAHEIGVKQVSHFLWKKYGSSAKVKFISVDFDPVVAEILEKVDDGQMGVILKRMFMRAGGMVAEKFGIEGLVTGEALGQVSSQTLTNLRHIDNVTDSLILRPLINWDKEDIIDLAREIGTEDFAKTMPEYCGVISKKPTVKAVKEKLEKEEAKFDFSVLEQAVYNARVMDIRDIEKESQEQAPEVEMVSELGSDVVVLDIRSAEEEDEKPLELDGVEVTHIPFFKLATKFGDLDQSKEYLLYCERGVMSRLQALLLIENGYKNVKVYRP</sequence>
<accession>B5FBH1</accession>
<gene>
    <name evidence="1" type="primary">thiI</name>
    <name type="ordered locus">VFMJ11_0736</name>
</gene>
<name>THII_ALIFM</name>
<proteinExistence type="inferred from homology"/>